<name>KIP2_EREGS</name>
<organism>
    <name type="scientific">Eremothecium gossypii (strain ATCC 10895 / CBS 109.51 / FGSC 9923 / NRRL Y-1056)</name>
    <name type="common">Yeast</name>
    <name type="synonym">Ashbya gossypii</name>
    <dbReference type="NCBI Taxonomy" id="284811"/>
    <lineage>
        <taxon>Eukaryota</taxon>
        <taxon>Fungi</taxon>
        <taxon>Dikarya</taxon>
        <taxon>Ascomycota</taxon>
        <taxon>Saccharomycotina</taxon>
        <taxon>Saccharomycetes</taxon>
        <taxon>Saccharomycetales</taxon>
        <taxon>Saccharomycetaceae</taxon>
        <taxon>Eremothecium</taxon>
    </lineage>
</organism>
<dbReference type="EMBL" id="AF378570">
    <property type="protein sequence ID" value="AAN87140.1"/>
    <property type="molecule type" value="Genomic_DNA"/>
</dbReference>
<dbReference type="EMBL" id="AE016816">
    <property type="protein sequence ID" value="AAS51371.1"/>
    <property type="molecule type" value="Genomic_DNA"/>
</dbReference>
<dbReference type="RefSeq" id="NP_983547.1">
    <property type="nucleotide sequence ID" value="NM_208900.1"/>
</dbReference>
<dbReference type="SMR" id="Q8J1G1"/>
<dbReference type="FunCoup" id="Q8J1G1">
    <property type="interactions" value="68"/>
</dbReference>
<dbReference type="STRING" id="284811.Q8J1G1"/>
<dbReference type="EnsemblFungi" id="AAS51371">
    <property type="protein sequence ID" value="AAS51371"/>
    <property type="gene ID" value="AGOS_ACR145W"/>
</dbReference>
<dbReference type="GeneID" id="4619679"/>
<dbReference type="KEGG" id="ago:AGOS_ACR145W"/>
<dbReference type="eggNOG" id="KOG0242">
    <property type="taxonomic scope" value="Eukaryota"/>
</dbReference>
<dbReference type="HOGENOM" id="CLU_001485_24_1_1"/>
<dbReference type="InParanoid" id="Q8J1G1"/>
<dbReference type="OMA" id="LCTIHMG"/>
<dbReference type="OrthoDB" id="3176171at2759"/>
<dbReference type="Proteomes" id="UP000000591">
    <property type="component" value="Chromosome III"/>
</dbReference>
<dbReference type="GO" id="GO:1903754">
    <property type="term" value="C:cortical microtubule plus-end"/>
    <property type="evidence" value="ECO:0007669"/>
    <property type="project" value="EnsemblFungi"/>
</dbReference>
<dbReference type="GO" id="GO:0005737">
    <property type="term" value="C:cytoplasm"/>
    <property type="evidence" value="ECO:0000318"/>
    <property type="project" value="GO_Central"/>
</dbReference>
<dbReference type="GO" id="GO:0005871">
    <property type="term" value="C:kinesin complex"/>
    <property type="evidence" value="ECO:0000318"/>
    <property type="project" value="GO_Central"/>
</dbReference>
<dbReference type="GO" id="GO:0005874">
    <property type="term" value="C:microtubule"/>
    <property type="evidence" value="ECO:0000318"/>
    <property type="project" value="GO_Central"/>
</dbReference>
<dbReference type="GO" id="GO:0005816">
    <property type="term" value="C:spindle pole body"/>
    <property type="evidence" value="ECO:0007669"/>
    <property type="project" value="EnsemblFungi"/>
</dbReference>
<dbReference type="GO" id="GO:0005524">
    <property type="term" value="F:ATP binding"/>
    <property type="evidence" value="ECO:0007669"/>
    <property type="project" value="UniProtKB-KW"/>
</dbReference>
<dbReference type="GO" id="GO:0016887">
    <property type="term" value="F:ATP hydrolysis activity"/>
    <property type="evidence" value="ECO:0000318"/>
    <property type="project" value="GO_Central"/>
</dbReference>
<dbReference type="GO" id="GO:0008017">
    <property type="term" value="F:microtubule binding"/>
    <property type="evidence" value="ECO:0000318"/>
    <property type="project" value="GO_Central"/>
</dbReference>
<dbReference type="GO" id="GO:0003777">
    <property type="term" value="F:microtubule motor activity"/>
    <property type="evidence" value="ECO:0000318"/>
    <property type="project" value="GO_Central"/>
</dbReference>
<dbReference type="GO" id="GO:0061863">
    <property type="term" value="F:microtubule plus end polymerase"/>
    <property type="evidence" value="ECO:0007669"/>
    <property type="project" value="EnsemblFungi"/>
</dbReference>
<dbReference type="GO" id="GO:0008574">
    <property type="term" value="F:plus-end-directed microtubule motor activity"/>
    <property type="evidence" value="ECO:0007669"/>
    <property type="project" value="EnsemblFungi"/>
</dbReference>
<dbReference type="GO" id="GO:0051301">
    <property type="term" value="P:cell division"/>
    <property type="evidence" value="ECO:0007669"/>
    <property type="project" value="UniProtKB-KW"/>
</dbReference>
<dbReference type="GO" id="GO:0046785">
    <property type="term" value="P:microtubule polymerization"/>
    <property type="evidence" value="ECO:0007669"/>
    <property type="project" value="EnsemblFungi"/>
</dbReference>
<dbReference type="GO" id="GO:0007018">
    <property type="term" value="P:microtubule-based movement"/>
    <property type="evidence" value="ECO:0000318"/>
    <property type="project" value="GO_Central"/>
</dbReference>
<dbReference type="GO" id="GO:0007026">
    <property type="term" value="P:negative regulation of microtubule depolymerization"/>
    <property type="evidence" value="ECO:0007669"/>
    <property type="project" value="EnsemblFungi"/>
</dbReference>
<dbReference type="GO" id="GO:0030473">
    <property type="term" value="P:nuclear migration along microtubule"/>
    <property type="evidence" value="ECO:0007669"/>
    <property type="project" value="EnsemblFungi"/>
</dbReference>
<dbReference type="FunFam" id="3.40.850.10:FF:000073">
    <property type="entry name" value="Kinesin-like protein"/>
    <property type="match status" value="1"/>
</dbReference>
<dbReference type="Gene3D" id="3.40.850.10">
    <property type="entry name" value="Kinesin motor domain"/>
    <property type="match status" value="1"/>
</dbReference>
<dbReference type="InterPro" id="IPR027640">
    <property type="entry name" value="Kinesin-like_fam"/>
</dbReference>
<dbReference type="InterPro" id="IPR019821">
    <property type="entry name" value="Kinesin_motor_CS"/>
</dbReference>
<dbReference type="InterPro" id="IPR001752">
    <property type="entry name" value="Kinesin_motor_dom"/>
</dbReference>
<dbReference type="InterPro" id="IPR036961">
    <property type="entry name" value="Kinesin_motor_dom_sf"/>
</dbReference>
<dbReference type="InterPro" id="IPR027417">
    <property type="entry name" value="P-loop_NTPase"/>
</dbReference>
<dbReference type="PANTHER" id="PTHR47968">
    <property type="entry name" value="CENTROMERE PROTEIN E"/>
    <property type="match status" value="1"/>
</dbReference>
<dbReference type="PANTHER" id="PTHR47968:SF36">
    <property type="entry name" value="KINESIN HEAVY CHAIN ISOFORM X1"/>
    <property type="match status" value="1"/>
</dbReference>
<dbReference type="Pfam" id="PF00225">
    <property type="entry name" value="Kinesin"/>
    <property type="match status" value="1"/>
</dbReference>
<dbReference type="PRINTS" id="PR00380">
    <property type="entry name" value="KINESINHEAVY"/>
</dbReference>
<dbReference type="SMART" id="SM00129">
    <property type="entry name" value="KISc"/>
    <property type="match status" value="1"/>
</dbReference>
<dbReference type="SUPFAM" id="SSF52540">
    <property type="entry name" value="P-loop containing nucleoside triphosphate hydrolases"/>
    <property type="match status" value="1"/>
</dbReference>
<dbReference type="PROSITE" id="PS00411">
    <property type="entry name" value="KINESIN_MOTOR_1"/>
    <property type="match status" value="1"/>
</dbReference>
<dbReference type="PROSITE" id="PS50067">
    <property type="entry name" value="KINESIN_MOTOR_2"/>
    <property type="match status" value="1"/>
</dbReference>
<proteinExistence type="inferred from homology"/>
<gene>
    <name type="primary">KIP2</name>
    <name type="ordered locus">ACR145W</name>
</gene>
<accession>Q8J1G1</accession>
<comment type="function">
    <text evidence="1">Required for assembly of the mitotic spindle.</text>
</comment>
<comment type="subcellular location">
    <subcellularLocation>
        <location evidence="5">Cytoplasm</location>
        <location evidence="5">Cytoskeleton</location>
    </subcellularLocation>
</comment>
<comment type="similarity">
    <text evidence="3">Belongs to the TRAFAC class myosin-kinesin ATPase superfamily. Kinesin family.</text>
</comment>
<feature type="chain" id="PRO_0000125452" description="Kinesin-like protein KIP2">
    <location>
        <begin position="1"/>
        <end position="685"/>
    </location>
</feature>
<feature type="domain" description="Kinesin motor" evidence="3">
    <location>
        <begin position="113"/>
        <end position="446"/>
    </location>
</feature>
<feature type="region of interest" description="Disordered" evidence="4">
    <location>
        <begin position="11"/>
        <end position="46"/>
    </location>
</feature>
<feature type="region of interest" description="Disordered" evidence="4">
    <location>
        <begin position="63"/>
        <end position="101"/>
    </location>
</feature>
<feature type="region of interest" description="Disordered" evidence="4">
    <location>
        <begin position="485"/>
        <end position="510"/>
    </location>
</feature>
<feature type="coiled-coil region" evidence="2">
    <location>
        <begin position="464"/>
        <end position="486"/>
    </location>
</feature>
<feature type="coiled-coil region" evidence="2">
    <location>
        <begin position="520"/>
        <end position="663"/>
    </location>
</feature>
<feature type="compositionally biased region" description="Low complexity" evidence="4">
    <location>
        <begin position="86"/>
        <end position="101"/>
    </location>
</feature>
<feature type="binding site" evidence="3">
    <location>
        <begin position="185"/>
        <end position="192"/>
    </location>
    <ligand>
        <name>ATP</name>
        <dbReference type="ChEBI" id="CHEBI:30616"/>
    </ligand>
</feature>
<protein>
    <recommendedName>
        <fullName>Kinesin-like protein KIP2</fullName>
    </recommendedName>
</protein>
<sequence length="685" mass="74696">MMMVARVATAEHVGSAGASLPQTPGSRSFALGAHPGPQKRIGGPAQGQTAFITPLVTPDGIYSRPSSPYMQASPLLKGSESGGSAGSPQSPDAPSSASGASVGNAIGSGYTGNVSVAIRIKPSESSTKDPWYASNDRLIHTEFGEFQFDHVFTKGVCNQEVYQALGVPIIDKLFEGYNATIFAYGMTGSGKTFTMSGNKQEPGLIPQCVGNIFDRISSEHHGASLAYEVKVSYLEIYNEKIYDLLNYVDRQAGSTGQPSRNATGLKIRDDSKYGVKVVDLTEQLVSSHEDVMKWIATGDRNRKTGETDFNTRSSRSHAIVLLRLTRYDLKTGSEATSTLSLCDLAGSERAVTQIVRRKEGAFINKSLLALGTVIAKLSMLGSQANGLQPSPAAGHIPYRDSKLTRILQPALTGDSIITTICTIDSKAESSTETTNTVRFASRAKNIALNVRKNEMDSHAEKDTIIQNLRKQLDEQHETIVMLRRSAAAPSGNGSTSPLDSPGVGGTSLSERTHNMEKGLLEVENSILKTKLEHCEKLLDKDMMVLEDPHVREIVEMLPLDIASVLESKVQGMESQLRQYRVYVQKLESDLLKAQRNIITTHSVQFNRQSTANVQEKYGSDVDIELLLEEQEAELMELRNALKRKDKMIEALQSARRLRDSALSPTTTVLLQRKESVIDPRDPQPV</sequence>
<evidence type="ECO:0000250" key="1"/>
<evidence type="ECO:0000255" key="2"/>
<evidence type="ECO:0000255" key="3">
    <source>
        <dbReference type="PROSITE-ProRule" id="PRU00283"/>
    </source>
</evidence>
<evidence type="ECO:0000256" key="4">
    <source>
        <dbReference type="SAM" id="MobiDB-lite"/>
    </source>
</evidence>
<evidence type="ECO:0000305" key="5"/>
<keyword id="KW-0067">ATP-binding</keyword>
<keyword id="KW-0131">Cell cycle</keyword>
<keyword id="KW-0132">Cell division</keyword>
<keyword id="KW-0175">Coiled coil</keyword>
<keyword id="KW-0963">Cytoplasm</keyword>
<keyword id="KW-0206">Cytoskeleton</keyword>
<keyword id="KW-0493">Microtubule</keyword>
<keyword id="KW-0498">Mitosis</keyword>
<keyword id="KW-0505">Motor protein</keyword>
<keyword id="KW-0547">Nucleotide-binding</keyword>
<keyword id="KW-1185">Reference proteome</keyword>
<reference key="1">
    <citation type="submission" date="2001-05" db="EMBL/GenBank/DDBJ databases">
        <title>Identification of kinesin-related proteins in the filamentous fungus Ashbya gossypii.</title>
        <authorList>
            <person name="Alberti-Segui C."/>
            <person name="Dietrich F.S."/>
            <person name="Philippsen P."/>
        </authorList>
    </citation>
    <scope>NUCLEOTIDE SEQUENCE [GENOMIC DNA]</scope>
</reference>
<reference key="2">
    <citation type="journal article" date="2004" name="Science">
        <title>The Ashbya gossypii genome as a tool for mapping the ancient Saccharomyces cerevisiae genome.</title>
        <authorList>
            <person name="Dietrich F.S."/>
            <person name="Voegeli S."/>
            <person name="Brachat S."/>
            <person name="Lerch A."/>
            <person name="Gates K."/>
            <person name="Steiner S."/>
            <person name="Mohr C."/>
            <person name="Poehlmann R."/>
            <person name="Luedi P."/>
            <person name="Choi S."/>
            <person name="Wing R.A."/>
            <person name="Flavier A."/>
            <person name="Gaffney T.D."/>
            <person name="Philippsen P."/>
        </authorList>
    </citation>
    <scope>NUCLEOTIDE SEQUENCE [LARGE SCALE GENOMIC DNA]</scope>
    <source>
        <strain>ATCC 10895 / CBS 109.51 / FGSC 9923 / NRRL Y-1056</strain>
    </source>
</reference>
<reference key="3">
    <citation type="journal article" date="2013" name="G3 (Bethesda)">
        <title>Genomes of Ashbya fungi isolated from insects reveal four mating-type loci, numerous translocations, lack of transposons, and distinct gene duplications.</title>
        <authorList>
            <person name="Dietrich F.S."/>
            <person name="Voegeli S."/>
            <person name="Kuo S."/>
            <person name="Philippsen P."/>
        </authorList>
    </citation>
    <scope>GENOME REANNOTATION</scope>
    <source>
        <strain>ATCC 10895 / CBS 109.51 / FGSC 9923 / NRRL Y-1056</strain>
    </source>
</reference>